<evidence type="ECO:0000255" key="1"/>
<evidence type="ECO:0000255" key="2">
    <source>
        <dbReference type="PROSITE-ProRule" id="PRU00498"/>
    </source>
</evidence>
<evidence type="ECO:0000256" key="3">
    <source>
        <dbReference type="SAM" id="MobiDB-lite"/>
    </source>
</evidence>
<evidence type="ECO:0000269" key="4">
    <source>
    </source>
</evidence>
<evidence type="ECO:0000303" key="5">
    <source>
    </source>
</evidence>
<evidence type="ECO:0000305" key="6"/>
<evidence type="ECO:0000312" key="7">
    <source>
        <dbReference type="Proteomes" id="UP000001940"/>
    </source>
</evidence>
<evidence type="ECO:0000312" key="8">
    <source>
        <dbReference type="WormBase" id="T14E8.4"/>
    </source>
</evidence>
<protein>
    <recommendedName>
        <fullName evidence="6">Protein aaim-1</fullName>
    </recommendedName>
    <alternativeName>
        <fullName evidence="5">Antibacterial and aids invasion by microsporidia 1 protein</fullName>
    </alternativeName>
</protein>
<comment type="function">
    <text evidence="4">Plays a role in promoting resistance to bacterial pathogens such as P.aeruginosa by inhibiting bacterial intestinal colonization.</text>
</comment>
<comment type="function">
    <text evidence="4">(Microbial infection) Promotes infection by microsporidian pathogens such as N.parisii in the early larval stages of development (PubMed:34994689). Involved in ensuring the proper orientation and location of the spore proteins of N.parisii during intestinal cell invasion (PubMed:34994689).</text>
</comment>
<comment type="subcellular location">
    <subcellularLocation>
        <location evidence="4">Secreted</location>
    </subcellularLocation>
</comment>
<comment type="tissue specificity">
    <text evidence="4">Expressed in the terminal bulb of the pharynx and the posterior of the intestine (at protein level) (PubMed:34994689). Expressed by intestinal cells and secreted into the intestinal lumen (at protein level) (PubMed:34994689).</text>
</comment>
<comment type="developmental stage">
    <text evidence="4">Expressed in the terminal bulb of the pharynx and the posterior of the intestine throughout development (at protein level) (PubMed:34994689). Expressed in the arcade cells of the pharynx in embryos and in L1 stage larvae (at protein level) (PubMed:34994689).</text>
</comment>
<comment type="induction">
    <text evidence="4">Up-regulated following infection by the microsporidian pathogen N.parisii or the bacterial pathogen P.aeruginosa.</text>
</comment>
<comment type="disruption phenotype">
    <text evidence="4">Resistant to infection by the microsporidian pathogen N.parisii and displays a fitness advantage phenotype, whereby there is increased fitness following infection by N.parisii (PubMed:34994689). Fewer invading N.parisii spores following infection at the L1 larval stage of development due to impaired orientation, location and angle of N.parisii spore proteins relative to the host's intestinal apical membrane (PubMed:34994689). Does not affect the ability of N.parisii to invade intestinal cells or N.parisii spore consumption by intestinal cells of L1 stage larvae (PubMed:34994689). Animals are not resistant to infection by N.parisii at the L3 larval stage of development (PubMed:34994689). Reduced survival following infection by the bacteria P.aeruginosa at the L1 and L4 larval stages due to increased accumulation of the bacteria within the intestinal lumen (PubMed:34994689). Reduced survival and increased numbers of N.parisii spore proteins following co-infection with N.parisii and P.aeruginosa (PubMed:34994689).</text>
</comment>
<feature type="signal peptide" evidence="1">
    <location>
        <begin position="1"/>
        <end position="16"/>
    </location>
</feature>
<feature type="chain" id="PRO_5005698498" description="Protein aaim-1">
    <location>
        <begin position="17"/>
        <end position="515"/>
    </location>
</feature>
<feature type="region of interest" description="Disordered" evidence="3">
    <location>
        <begin position="248"/>
        <end position="267"/>
    </location>
</feature>
<feature type="glycosylation site" description="N-linked (GlcNAc...) asparagine" evidence="2">
    <location>
        <position position="46"/>
    </location>
</feature>
<feature type="glycosylation site" description="N-linked (GlcNAc...) asparagine" evidence="2">
    <location>
        <position position="127"/>
    </location>
</feature>
<feature type="glycosylation site" description="N-linked (GlcNAc...) asparagine" evidence="2">
    <location>
        <position position="447"/>
    </location>
</feature>
<feature type="mutagenesis site" description="Promotes infection by the microsporidian pathogen N.parisii as in wild-type." evidence="4">
    <location>
        <begin position="1"/>
        <end position="17"/>
    </location>
</feature>
<proteinExistence type="evidence at protein level"/>
<reference evidence="7" key="1">
    <citation type="journal article" date="1998" name="Science">
        <title>Genome sequence of the nematode C. elegans: a platform for investigating biology.</title>
        <authorList>
            <consortium name="The C. elegans sequencing consortium"/>
        </authorList>
    </citation>
    <scope>NUCLEOTIDE SEQUENCE [LARGE SCALE GENOMIC DNA]</scope>
    <source>
        <strain evidence="7">Bristol N2</strain>
    </source>
</reference>
<reference evidence="6" key="2">
    <citation type="journal article" date="2022" name="Elife">
        <title>An intestinally secreted host factor promotes microsporidia invasion of C. elegans.</title>
        <authorList>
            <person name="Tamim El Jarkass H."/>
            <person name="Mok C."/>
            <person name="Schertzberg M.R."/>
            <person name="Fraser A.G."/>
            <person name="Troemel E.R."/>
            <person name="Reinke A.W."/>
        </authorList>
    </citation>
    <scope>FUNCTION</scope>
    <scope>SUBCELLULAR LOCATION</scope>
    <scope>TISSUE SPECIFICITY</scope>
    <scope>DEVELOPMENTAL STAGE</scope>
    <scope>INDUCTION</scope>
    <scope>DISRUPTION PHENOTYPE</scope>
    <scope>MUTAGENESIS OF 1-MET--CYS-17</scope>
</reference>
<accession>Q5WRS0</accession>
<gene>
    <name evidence="5 8" type="primary">aaim-1</name>
    <name evidence="8" type="ORF">T14E8.4</name>
</gene>
<organism evidence="7">
    <name type="scientific">Caenorhabditis elegans</name>
    <dbReference type="NCBI Taxonomy" id="6239"/>
    <lineage>
        <taxon>Eukaryota</taxon>
        <taxon>Metazoa</taxon>
        <taxon>Ecdysozoa</taxon>
        <taxon>Nematoda</taxon>
        <taxon>Chromadorea</taxon>
        <taxon>Rhabditida</taxon>
        <taxon>Rhabditina</taxon>
        <taxon>Rhabditomorpha</taxon>
        <taxon>Rhabditoidea</taxon>
        <taxon>Rhabditidae</taxon>
        <taxon>Peloderinae</taxon>
        <taxon>Caenorhabditis</taxon>
    </lineage>
</organism>
<keyword id="KW-0325">Glycoprotein</keyword>
<keyword id="KW-1185">Reference proteome</keyword>
<keyword id="KW-0964">Secreted</keyword>
<keyword id="KW-0732">Signal</keyword>
<dbReference type="EMBL" id="BX284606">
    <property type="protein sequence ID" value="CCD83408.2"/>
    <property type="molecule type" value="Genomic_DNA"/>
</dbReference>
<dbReference type="RefSeq" id="NP_001024909.3">
    <property type="nucleotide sequence ID" value="NM_001029738.5"/>
</dbReference>
<dbReference type="FunCoup" id="Q5WRS0">
    <property type="interactions" value="397"/>
</dbReference>
<dbReference type="STRING" id="6239.T14E8.4.1"/>
<dbReference type="GlyCosmos" id="Q5WRS0">
    <property type="glycosylation" value="3 sites, No reported glycans"/>
</dbReference>
<dbReference type="PaxDb" id="6239-T14E8.4"/>
<dbReference type="EnsemblMetazoa" id="T14E8.4.1">
    <property type="protein sequence ID" value="T14E8.4.1"/>
    <property type="gene ID" value="WBGene00043981"/>
</dbReference>
<dbReference type="GeneID" id="3565421"/>
<dbReference type="KEGG" id="cel:CELE_T14E8.4"/>
<dbReference type="UCSC" id="T14E8.4">
    <property type="organism name" value="c. elegans"/>
</dbReference>
<dbReference type="AGR" id="WB:WBGene00043981"/>
<dbReference type="CTD" id="3565421"/>
<dbReference type="WormBase" id="T14E8.4">
    <property type="protein sequence ID" value="CE50409"/>
    <property type="gene ID" value="WBGene00043981"/>
    <property type="gene designation" value="aaim-1"/>
</dbReference>
<dbReference type="eggNOG" id="ENOG502TG6B">
    <property type="taxonomic scope" value="Eukaryota"/>
</dbReference>
<dbReference type="GeneTree" id="ENSGT00970000196263"/>
<dbReference type="HOGENOM" id="CLU_043714_0_0_1"/>
<dbReference type="InParanoid" id="Q5WRS0"/>
<dbReference type="OMA" id="EAKLMHT"/>
<dbReference type="OrthoDB" id="5779738at2759"/>
<dbReference type="PRO" id="PR:Q5WRS0"/>
<dbReference type="Proteomes" id="UP000001940">
    <property type="component" value="Chromosome X"/>
</dbReference>
<dbReference type="Bgee" id="WBGene00043981">
    <property type="expression patterns" value="Expressed in pharyngeal muscle cell (C elegans) and 3 other cell types or tissues"/>
</dbReference>
<dbReference type="GO" id="GO:0005615">
    <property type="term" value="C:extracellular space"/>
    <property type="evidence" value="ECO:0000314"/>
    <property type="project" value="UniProtKB"/>
</dbReference>
<dbReference type="GO" id="GO:2000535">
    <property type="term" value="P:regulation of entry of bacterium into host cell"/>
    <property type="evidence" value="ECO:0000315"/>
    <property type="project" value="UniProtKB"/>
</dbReference>
<name>AAIM1_CAEEL</name>
<sequence length="515" mass="58205">MRLLFFFSILYTASLCCQLKDFLPCVMQLSAQKVDFNMNPIEVIFNITTEAKLMHTCRTYSRILPCFDQKMVQCGKPSEKTQLERGKRLHSYLCAPFSLQRQKIFLRRSKCIQDVLAEPQSSVCNRNDTVFADKLQSCREMCTRPDCVSKIELSEVSTCTYINIGKKCTAEAAQFFAQMQQVLTNKEYPMQCQYDLRKKPESELKKGLPIESLVAQTTSSTTYVTVHPPALPSVIDGVVTRTSLPIMRRTDPNSKFKPRPTTSQSNGPVIKTVIVDERGAPMNQPTSTQKPKVVHKFLPNPYTTKNPNTLKNDIIRTTRTIIPVVDKHTYVPWNYKVDAVQVSTLTSALAPVKPTETVISSPPVAFNFKLPAEQTSTQPFRVEINWHDDEVKQEPTKAPGVFVSPWYLKTPSHIPPEIEFATPTPLISSPLEAVSPILSQLKSNSLNFTELGNQANNYFSAALSAFAETKKEMAHNDPWRTIIDAVAPTIHKFSPDVIPRIREEINRIQPHQQKN</sequence>